<sequence>MANSLRNVNDYDPFKYRPSYFDLEAPTESFALGKFVDAIEVKQMALDAFSESSMVSIATSQLPKTAYTATSFIESEYYSFPYLFNDQKYYWDYFDYKIPAADFAVLELELDLNNQQDQQIKDHFIDPAIKAYKQLGDSTGLFATKPLTEYQNDTHYLLGYPVVPTDHTQLWECKQGAERFSYGYFYSNMARLTKNLRQGDPNAGSKTHIEYSNELLDKDSMDQGIVRFSTFLGANINYHDYDYRQQGYGLTLTDTNLPGGSSGSLVFNQDKKISSIYSAATESDSVGYAQLLRTPRDVNGISVVSQSYDLIFGDSNTKRYYAMFAKKQQTHLYSEILKSTDEQYRYVVDKQFN</sequence>
<feature type="chain" id="PRO_0000210736" description="Uncharacterized protein MPN_591">
    <location>
        <begin position="1"/>
        <end position="353"/>
    </location>
</feature>
<name>Y591_MYCPN</name>
<dbReference type="EMBL" id="U43738">
    <property type="protein sequence ID" value="AAC43665.1"/>
    <property type="molecule type" value="Genomic_DNA"/>
</dbReference>
<dbReference type="EMBL" id="U00089">
    <property type="protein sequence ID" value="AAB95899.1"/>
    <property type="molecule type" value="Genomic_DNA"/>
</dbReference>
<dbReference type="PIR" id="S62854">
    <property type="entry name" value="S62854"/>
</dbReference>
<dbReference type="RefSeq" id="NP_110280.1">
    <property type="nucleotide sequence ID" value="NC_000912.1"/>
</dbReference>
<dbReference type="STRING" id="272634.MPN_591"/>
<dbReference type="EnsemblBacteria" id="AAB95899">
    <property type="protein sequence ID" value="AAB95899"/>
    <property type="gene ID" value="MPN_591"/>
</dbReference>
<dbReference type="KEGG" id="mpn:MPN_591"/>
<dbReference type="PATRIC" id="fig|272634.6.peg.654"/>
<dbReference type="HOGENOM" id="CLU_038569_0_0_14"/>
<dbReference type="OrthoDB" id="395427at2"/>
<dbReference type="BioCyc" id="MPNE272634:G1GJ3-963-MONOMER"/>
<dbReference type="Proteomes" id="UP000000808">
    <property type="component" value="Chromosome"/>
</dbReference>
<dbReference type="GO" id="GO:0005524">
    <property type="term" value="F:ATP binding"/>
    <property type="evidence" value="ECO:0007669"/>
    <property type="project" value="InterPro"/>
</dbReference>
<dbReference type="GO" id="GO:0003723">
    <property type="term" value="F:RNA binding"/>
    <property type="evidence" value="ECO:0007669"/>
    <property type="project" value="InterPro"/>
</dbReference>
<dbReference type="GO" id="GO:0003724">
    <property type="term" value="F:RNA helicase activity"/>
    <property type="evidence" value="ECO:0007669"/>
    <property type="project" value="InterPro"/>
</dbReference>
<dbReference type="InterPro" id="IPR001850">
    <property type="entry name" value="Flavi_NS3_S7"/>
</dbReference>
<dbReference type="InterPro" id="IPR022381">
    <property type="entry name" value="Uncharacterised_MG067"/>
</dbReference>
<dbReference type="Pfam" id="PF00949">
    <property type="entry name" value="Peptidase_S7"/>
    <property type="match status" value="1"/>
</dbReference>
<dbReference type="PRINTS" id="PR00840">
    <property type="entry name" value="Y06768FAMILY"/>
</dbReference>
<gene>
    <name type="ordered locus">MPN_591</name>
    <name type="ORF">D02_orf353V</name>
    <name type="ORF">MP251</name>
</gene>
<comment type="similarity">
    <text evidence="1">Belongs to the MG067/MG068/MG395 family.</text>
</comment>
<organism>
    <name type="scientific">Mycoplasma pneumoniae (strain ATCC 29342 / M129 / Subtype 1)</name>
    <name type="common">Mycoplasmoides pneumoniae</name>
    <dbReference type="NCBI Taxonomy" id="272634"/>
    <lineage>
        <taxon>Bacteria</taxon>
        <taxon>Bacillati</taxon>
        <taxon>Mycoplasmatota</taxon>
        <taxon>Mycoplasmoidales</taxon>
        <taxon>Mycoplasmoidaceae</taxon>
        <taxon>Mycoplasmoides</taxon>
    </lineage>
</organism>
<keyword id="KW-1185">Reference proteome</keyword>
<accession>Q50336</accession>
<evidence type="ECO:0000305" key="1"/>
<proteinExistence type="inferred from homology"/>
<reference key="1">
    <citation type="journal article" date="1996" name="Nucleic Acids Res.">
        <title>Sequence analysis of 56 kb from the genome of the bacterium Mycoplasma pneumoniae comprising the dnaA region, the atp operon and a cluster of ribosomal protein genes.</title>
        <authorList>
            <person name="Hilbert H."/>
            <person name="Himmelreich R."/>
            <person name="Plagens H."/>
            <person name="Herrmann R."/>
        </authorList>
    </citation>
    <scope>NUCLEOTIDE SEQUENCE [GENOMIC DNA]</scope>
    <source>
        <strain>ATCC 29342 / M129 / Subtype 1</strain>
    </source>
</reference>
<reference key="2">
    <citation type="journal article" date="1996" name="Nucleic Acids Res.">
        <title>Complete sequence analysis of the genome of the bacterium Mycoplasma pneumoniae.</title>
        <authorList>
            <person name="Himmelreich R."/>
            <person name="Hilbert H."/>
            <person name="Plagens H."/>
            <person name="Pirkl E."/>
            <person name="Li B.-C."/>
            <person name="Herrmann R."/>
        </authorList>
    </citation>
    <scope>NUCLEOTIDE SEQUENCE [LARGE SCALE GENOMIC DNA]</scope>
    <source>
        <strain>ATCC 29342 / M129 / Subtype 1</strain>
    </source>
</reference>
<protein>
    <recommendedName>
        <fullName>Uncharacterized protein MPN_591</fullName>
    </recommendedName>
</protein>